<comment type="function">
    <text evidence="1">Toxic component of a type II toxin-antitoxin (TA) system. Acts as an endoribonuclease, cleaving in U-rich regions. Neutralized by cognate antitoxin MazE3.</text>
</comment>
<comment type="subunit">
    <text evidence="1">Forms a complex with cognate antitoxin MazE3.</text>
</comment>
<comment type="similarity">
    <text evidence="2">Belongs to the PemK/MazF family.</text>
</comment>
<name>MAZF3_MYCTO</name>
<evidence type="ECO:0000250" key="1">
    <source>
        <dbReference type="UniProtKB" id="P9WIH9"/>
    </source>
</evidence>
<evidence type="ECO:0000305" key="2"/>
<sequence>MRPIHIAQLDKARPVLILTREVVRPHLTNVTVAPITTTVRGLATEVPVDAVNGLNQPSVVSCDNTQTIPVCDLGRQIGYLLASQEPALAEAIGNAFDLDWVVA</sequence>
<keyword id="KW-0255">Endonuclease</keyword>
<keyword id="KW-0378">Hydrolase</keyword>
<keyword id="KW-0540">Nuclease</keyword>
<keyword id="KW-1185">Reference proteome</keyword>
<keyword id="KW-1277">Toxin-antitoxin system</keyword>
<organism>
    <name type="scientific">Mycobacterium tuberculosis (strain CDC 1551 / Oshkosh)</name>
    <dbReference type="NCBI Taxonomy" id="83331"/>
    <lineage>
        <taxon>Bacteria</taxon>
        <taxon>Bacillati</taxon>
        <taxon>Actinomycetota</taxon>
        <taxon>Actinomycetes</taxon>
        <taxon>Mycobacteriales</taxon>
        <taxon>Mycobacteriaceae</taxon>
        <taxon>Mycobacterium</taxon>
        <taxon>Mycobacterium tuberculosis complex</taxon>
    </lineage>
</organism>
<dbReference type="EC" id="3.1.-.-"/>
<dbReference type="EMBL" id="AE000516">
    <property type="protein sequence ID" value="AAK45392.1"/>
    <property type="molecule type" value="Genomic_DNA"/>
</dbReference>
<dbReference type="PIR" id="D70897">
    <property type="entry name" value="D70897"/>
</dbReference>
<dbReference type="RefSeq" id="WP_003898728.1">
    <property type="nucleotide sequence ID" value="NZ_KK341227.1"/>
</dbReference>
<dbReference type="SMR" id="P9WIH8"/>
<dbReference type="KEGG" id="mtc:MT1134"/>
<dbReference type="PATRIC" id="fig|83331.31.peg.1224"/>
<dbReference type="HOGENOM" id="CLU_174647_0_0_11"/>
<dbReference type="Proteomes" id="UP000001020">
    <property type="component" value="Chromosome"/>
</dbReference>
<dbReference type="GO" id="GO:0003677">
    <property type="term" value="F:DNA binding"/>
    <property type="evidence" value="ECO:0007669"/>
    <property type="project" value="InterPro"/>
</dbReference>
<dbReference type="GO" id="GO:0004521">
    <property type="term" value="F:RNA endonuclease activity"/>
    <property type="evidence" value="ECO:0007669"/>
    <property type="project" value="TreeGrafter"/>
</dbReference>
<dbReference type="GO" id="GO:0006402">
    <property type="term" value="P:mRNA catabolic process"/>
    <property type="evidence" value="ECO:0007669"/>
    <property type="project" value="TreeGrafter"/>
</dbReference>
<dbReference type="GO" id="GO:0016075">
    <property type="term" value="P:rRNA catabolic process"/>
    <property type="evidence" value="ECO:0007669"/>
    <property type="project" value="TreeGrafter"/>
</dbReference>
<dbReference type="Gene3D" id="2.30.30.110">
    <property type="match status" value="1"/>
</dbReference>
<dbReference type="InterPro" id="IPR003477">
    <property type="entry name" value="PemK-like"/>
</dbReference>
<dbReference type="InterPro" id="IPR011067">
    <property type="entry name" value="Plasmid_toxin/cell-grow_inhib"/>
</dbReference>
<dbReference type="PANTHER" id="PTHR33988:SF2">
    <property type="entry name" value="ENDORIBONUCLEASE MAZF"/>
    <property type="match status" value="1"/>
</dbReference>
<dbReference type="PANTHER" id="PTHR33988">
    <property type="entry name" value="ENDORIBONUCLEASE MAZF-RELATED"/>
    <property type="match status" value="1"/>
</dbReference>
<dbReference type="Pfam" id="PF02452">
    <property type="entry name" value="PemK_toxin"/>
    <property type="match status" value="1"/>
</dbReference>
<dbReference type="SUPFAM" id="SSF50118">
    <property type="entry name" value="Cell growth inhibitor/plasmid maintenance toxic component"/>
    <property type="match status" value="1"/>
</dbReference>
<accession>P9WIH8</accession>
<accession>L0T5Q4</accession>
<accession>O53450</accession>
<accession>Q7D8U7</accession>
<protein>
    <recommendedName>
        <fullName evidence="2">Endoribonuclease MazF3</fullName>
        <ecNumber>3.1.-.-</ecNumber>
    </recommendedName>
    <alternativeName>
        <fullName>Toxin MazF3</fullName>
    </alternativeName>
    <alternativeName>
        <fullName>mRNA interferase MazF3</fullName>
    </alternativeName>
</protein>
<reference key="1">
    <citation type="journal article" date="2002" name="J. Bacteriol.">
        <title>Whole-genome comparison of Mycobacterium tuberculosis clinical and laboratory strains.</title>
        <authorList>
            <person name="Fleischmann R.D."/>
            <person name="Alland D."/>
            <person name="Eisen J.A."/>
            <person name="Carpenter L."/>
            <person name="White O."/>
            <person name="Peterson J.D."/>
            <person name="DeBoy R.T."/>
            <person name="Dodson R.J."/>
            <person name="Gwinn M.L."/>
            <person name="Haft D.H."/>
            <person name="Hickey E.K."/>
            <person name="Kolonay J.F."/>
            <person name="Nelson W.C."/>
            <person name="Umayam L.A."/>
            <person name="Ermolaeva M.D."/>
            <person name="Salzberg S.L."/>
            <person name="Delcher A."/>
            <person name="Utterback T.R."/>
            <person name="Weidman J.F."/>
            <person name="Khouri H.M."/>
            <person name="Gill J."/>
            <person name="Mikula A."/>
            <person name="Bishai W."/>
            <person name="Jacobs W.R. Jr."/>
            <person name="Venter J.C."/>
            <person name="Fraser C.M."/>
        </authorList>
    </citation>
    <scope>NUCLEOTIDE SEQUENCE [LARGE SCALE GENOMIC DNA]</scope>
    <source>
        <strain>CDC 1551 / Oshkosh</strain>
    </source>
</reference>
<proteinExistence type="inferred from homology"/>
<feature type="chain" id="PRO_0000428004" description="Endoribonuclease MazF3">
    <location>
        <begin position="1"/>
        <end position="103"/>
    </location>
</feature>
<gene>
    <name type="primary">mazF3</name>
    <name type="ordered locus">MT1134</name>
</gene>